<organism>
    <name type="scientific">Homo sapiens</name>
    <name type="common">Human</name>
    <dbReference type="NCBI Taxonomy" id="9606"/>
    <lineage>
        <taxon>Eukaryota</taxon>
        <taxon>Metazoa</taxon>
        <taxon>Chordata</taxon>
        <taxon>Craniata</taxon>
        <taxon>Vertebrata</taxon>
        <taxon>Euteleostomi</taxon>
        <taxon>Mammalia</taxon>
        <taxon>Eutheria</taxon>
        <taxon>Euarchontoglires</taxon>
        <taxon>Primates</taxon>
        <taxon>Haplorrhini</taxon>
        <taxon>Catarrhini</taxon>
        <taxon>Hominidae</taxon>
        <taxon>Homo</taxon>
    </lineage>
</organism>
<gene>
    <name evidence="6" type="primary">HOXB-AS3</name>
</gene>
<dbReference type="EMBL" id="AC103702">
    <property type="status" value="NOT_ANNOTATED_CDS"/>
    <property type="molecule type" value="Genomic_DNA"/>
</dbReference>
<dbReference type="GlyGen" id="C0HLZ6">
    <property type="glycosylation" value="1 site"/>
</dbReference>
<dbReference type="PeptideAtlas" id="C0HLZ6"/>
<dbReference type="AGR" id="HGNC:40283"/>
<dbReference type="GeneCards" id="HOXB-AS3"/>
<dbReference type="HGNC" id="HGNC:40283">
    <property type="gene designation" value="HOXB-AS3"/>
</dbReference>
<dbReference type="InParanoid" id="C0HLZ6"/>
<dbReference type="PRO" id="PR:C0HLZ6"/>
<dbReference type="Proteomes" id="UP000005640">
    <property type="component" value="Unplaced"/>
</dbReference>
<dbReference type="GO" id="GO:0006397">
    <property type="term" value="P:mRNA processing"/>
    <property type="evidence" value="ECO:0007669"/>
    <property type="project" value="UniProtKB-KW"/>
</dbReference>
<dbReference type="GO" id="GO:2000632">
    <property type="term" value="P:negative regulation of pre-miRNA processing"/>
    <property type="evidence" value="ECO:0000314"/>
    <property type="project" value="UniProtKB"/>
</dbReference>
<dbReference type="GO" id="GO:0050821">
    <property type="term" value="P:protein stabilization"/>
    <property type="evidence" value="ECO:0000315"/>
    <property type="project" value="UniProtKB"/>
</dbReference>
<dbReference type="GO" id="GO:0043484">
    <property type="term" value="P:regulation of RNA splicing"/>
    <property type="evidence" value="ECO:0000315"/>
    <property type="project" value="UniProtKB"/>
</dbReference>
<dbReference type="GO" id="GO:0008380">
    <property type="term" value="P:RNA splicing"/>
    <property type="evidence" value="ECO:0007669"/>
    <property type="project" value="UniProtKB-KW"/>
</dbReference>
<dbReference type="InterPro" id="IPR054146">
    <property type="entry name" value="HOXB-AS3"/>
</dbReference>
<dbReference type="Pfam" id="PF21970">
    <property type="entry name" value="HOXB-AS3"/>
    <property type="match status" value="1"/>
</dbReference>
<proteinExistence type="evidence at protein level"/>
<keyword id="KW-0507">mRNA processing</keyword>
<keyword id="KW-0508">mRNA splicing</keyword>
<keyword id="KW-1185">Reference proteome</keyword>
<accession>C0HLZ6</accession>
<feature type="chain" id="PRO_0000455048" description="HOXB-AS3 peptide">
    <location>
        <begin position="1"/>
        <end position="53"/>
    </location>
</feature>
<feature type="region of interest" description="Disordered" evidence="1">
    <location>
        <begin position="1"/>
        <end position="53"/>
    </location>
</feature>
<reference evidence="5" key="1">
    <citation type="journal article" date="2006" name="Nature">
        <title>DNA sequence of human chromosome 17 and analysis of rearrangement in the human lineage.</title>
        <authorList>
            <person name="Zody M.C."/>
            <person name="Garber M."/>
            <person name="Adams D.J."/>
            <person name="Sharpe T."/>
            <person name="Harrow J."/>
            <person name="Lupski J.R."/>
            <person name="Nicholson C."/>
            <person name="Searle S.M."/>
            <person name="Wilming L."/>
            <person name="Young S.K."/>
            <person name="Abouelleil A."/>
            <person name="Allen N.R."/>
            <person name="Bi W."/>
            <person name="Bloom T."/>
            <person name="Borowsky M.L."/>
            <person name="Bugalter B.E."/>
            <person name="Butler J."/>
            <person name="Chang J.L."/>
            <person name="Chen C.-K."/>
            <person name="Cook A."/>
            <person name="Corum B."/>
            <person name="Cuomo C.A."/>
            <person name="de Jong P.J."/>
            <person name="DeCaprio D."/>
            <person name="Dewar K."/>
            <person name="FitzGerald M."/>
            <person name="Gilbert J."/>
            <person name="Gibson R."/>
            <person name="Gnerre S."/>
            <person name="Goldstein S."/>
            <person name="Grafham D.V."/>
            <person name="Grocock R."/>
            <person name="Hafez N."/>
            <person name="Hagopian D.S."/>
            <person name="Hart E."/>
            <person name="Norman C.H."/>
            <person name="Humphray S."/>
            <person name="Jaffe D.B."/>
            <person name="Jones M."/>
            <person name="Kamal M."/>
            <person name="Khodiyar V.K."/>
            <person name="LaButti K."/>
            <person name="Laird G."/>
            <person name="Lehoczky J."/>
            <person name="Liu X."/>
            <person name="Lokyitsang T."/>
            <person name="Loveland J."/>
            <person name="Lui A."/>
            <person name="Macdonald P."/>
            <person name="Major J.E."/>
            <person name="Matthews L."/>
            <person name="Mauceli E."/>
            <person name="McCarroll S.A."/>
            <person name="Mihalev A.H."/>
            <person name="Mudge J."/>
            <person name="Nguyen C."/>
            <person name="Nicol R."/>
            <person name="O'Leary S.B."/>
            <person name="Osoegawa K."/>
            <person name="Schwartz D.C."/>
            <person name="Shaw-Smith C."/>
            <person name="Stankiewicz P."/>
            <person name="Steward C."/>
            <person name="Swarbreck D."/>
            <person name="Venkataraman V."/>
            <person name="Whittaker C.A."/>
            <person name="Yang X."/>
            <person name="Zimmer A.R."/>
            <person name="Bradley A."/>
            <person name="Hubbard T."/>
            <person name="Birren B.W."/>
            <person name="Rogers J."/>
            <person name="Lander E.S."/>
            <person name="Nusbaum C."/>
        </authorList>
    </citation>
    <scope>NUCLEOTIDE SEQUENCE [LARGE SCALE GENOMIC DNA]</scope>
</reference>
<reference evidence="5" key="2">
    <citation type="journal article" date="2017" name="Mol. Cell">
        <title>A Peptide Encoded by a Putative lncRNA HOXB-AS3 Suppresses Colon Cancer Growth.</title>
        <authorList>
            <person name="Huang J.Z."/>
            <person name="Chen M."/>
            <person name="Chen D."/>
            <person name="Gao X.C."/>
            <person name="Zhu S."/>
            <person name="Huang H."/>
            <person name="Hu M."/>
            <person name="Zhu H."/>
            <person name="Yan G.R."/>
        </authorList>
    </citation>
    <scope>IDENTIFICATION BY MASS SPECTROMETRY</scope>
    <scope>FUNCTION</scope>
    <scope>INTERACTION WITH HNRNPA1</scope>
</reference>
<reference evidence="5" key="3">
    <citation type="journal article" date="2021" name="Oncol. Lett.">
        <title>A micro-peptide encoded by HOXB-AS3 promotes the proliferation and viability of oral squamous cell carcinoma cell lines by directly binding with IGF2BP2 to stabilize c-Myc.</title>
        <authorList>
            <person name="Leng F."/>
            <person name="Miu Y.Y."/>
            <person name="Zhang Y."/>
            <person name="Luo H."/>
            <person name="Lu X.L."/>
            <person name="Cheng H."/>
            <person name="Zheng Z.G."/>
        </authorList>
    </citation>
    <scope>FUNCTION</scope>
    <scope>INTERACTION WITH IGF2BP2</scope>
</reference>
<protein>
    <recommendedName>
        <fullName evidence="4">HOXB-AS3 peptide</fullName>
    </recommendedName>
</protein>
<sequence>MPVLPGTQRYPHQRRRFQAAGGGAESGKRGSEEAPGVAWSGSESGRDAATPAW</sequence>
<name>HAS3P_HUMAN</name>
<evidence type="ECO:0000256" key="1">
    <source>
        <dbReference type="SAM" id="MobiDB-lite"/>
    </source>
</evidence>
<evidence type="ECO:0000269" key="2">
    <source>
    </source>
</evidence>
<evidence type="ECO:0000269" key="3">
    <source>
    </source>
</evidence>
<evidence type="ECO:0000303" key="4">
    <source>
    </source>
</evidence>
<evidence type="ECO:0000305" key="5"/>
<evidence type="ECO:0000312" key="6">
    <source>
        <dbReference type="HGNC" id="HGNC:40283"/>
    </source>
</evidence>
<comment type="function">
    <text evidence="2 3">Blocks the binding of HNRNPA1 to the intronic sequences flanking exon 9 of the PKM gene by competitively binding to the HNRNPA1 RGG-box motif (PubMed:28985503). This inhibits inclusion of exon 9 and promotes inclusion of exon 10, suppressing formation of the PKM M2 isoform and promoting production of the M1 isoform (PubMed:28985503). Also suppresses HNRNPA1-mediated processing of microRNA 18a (miR-18a) (PubMed:28985503). Promotes MYC stability through interaction with IGF2BP2 (PubMed:34457052).</text>
</comment>
<comment type="subunit">
    <text evidence="2 3">Interacts with HNRNPA1 (via the RGG-box) (PubMed:28985503). Interacts with IGF2BP2 (PubMed:34457052).</text>
</comment>
<comment type="miscellaneous">
    <text evidence="2 3">By blocking HNRNPA1-dependent PKM splicing, inhibits colon cancer cell aerobic glycolysis and suppresses colon cancer cell growth, colony formation, migration and invasion (PubMed:28985503). Promotes the proliferation and viability of oral squamous cell carcinoma cells (PubMed:34457052).</text>
</comment>